<gene>
    <name evidence="1" type="primary">infA2</name>
    <name type="synonym">infA1</name>
    <name type="ordered locus">H16_A3463</name>
</gene>
<accession>Q0K640</accession>
<reference key="1">
    <citation type="journal article" date="2006" name="Nat. Biotechnol.">
        <title>Genome sequence of the bioplastic-producing 'Knallgas' bacterium Ralstonia eutropha H16.</title>
        <authorList>
            <person name="Pohlmann A."/>
            <person name="Fricke W.F."/>
            <person name="Reinecke F."/>
            <person name="Kusian B."/>
            <person name="Liesegang H."/>
            <person name="Cramm R."/>
            <person name="Eitinger T."/>
            <person name="Ewering C."/>
            <person name="Poetter M."/>
            <person name="Schwartz E."/>
            <person name="Strittmatter A."/>
            <person name="Voss I."/>
            <person name="Gottschalk G."/>
            <person name="Steinbuechel A."/>
            <person name="Friedrich B."/>
            <person name="Bowien B."/>
        </authorList>
    </citation>
    <scope>NUCLEOTIDE SEQUENCE [LARGE SCALE GENOMIC DNA]</scope>
    <source>
        <strain>ATCC 17699 / DSM 428 / KCTC 22496 / NCIMB 10442 / H16 / Stanier 337</strain>
    </source>
</reference>
<dbReference type="EMBL" id="AM260479">
    <property type="protein sequence ID" value="CAJ94531.1"/>
    <property type="molecule type" value="Genomic_DNA"/>
</dbReference>
<dbReference type="SMR" id="Q0K640"/>
<dbReference type="STRING" id="381666.H16_A3463"/>
<dbReference type="KEGG" id="reh:H16_A3463"/>
<dbReference type="eggNOG" id="COG0361">
    <property type="taxonomic scope" value="Bacteria"/>
</dbReference>
<dbReference type="HOGENOM" id="CLU_151267_1_0_4"/>
<dbReference type="OrthoDB" id="9803250at2"/>
<dbReference type="Proteomes" id="UP000008210">
    <property type="component" value="Chromosome 1"/>
</dbReference>
<dbReference type="GO" id="GO:0005829">
    <property type="term" value="C:cytosol"/>
    <property type="evidence" value="ECO:0007669"/>
    <property type="project" value="TreeGrafter"/>
</dbReference>
<dbReference type="GO" id="GO:0043022">
    <property type="term" value="F:ribosome binding"/>
    <property type="evidence" value="ECO:0007669"/>
    <property type="project" value="UniProtKB-UniRule"/>
</dbReference>
<dbReference type="GO" id="GO:0019843">
    <property type="term" value="F:rRNA binding"/>
    <property type="evidence" value="ECO:0007669"/>
    <property type="project" value="UniProtKB-UniRule"/>
</dbReference>
<dbReference type="GO" id="GO:0003743">
    <property type="term" value="F:translation initiation factor activity"/>
    <property type="evidence" value="ECO:0007669"/>
    <property type="project" value="UniProtKB-UniRule"/>
</dbReference>
<dbReference type="CDD" id="cd04451">
    <property type="entry name" value="S1_IF1"/>
    <property type="match status" value="1"/>
</dbReference>
<dbReference type="FunFam" id="2.40.50.140:FF:000002">
    <property type="entry name" value="Translation initiation factor IF-1"/>
    <property type="match status" value="1"/>
</dbReference>
<dbReference type="Gene3D" id="2.40.50.140">
    <property type="entry name" value="Nucleic acid-binding proteins"/>
    <property type="match status" value="1"/>
</dbReference>
<dbReference type="HAMAP" id="MF_00075">
    <property type="entry name" value="IF_1"/>
    <property type="match status" value="1"/>
</dbReference>
<dbReference type="InterPro" id="IPR012340">
    <property type="entry name" value="NA-bd_OB-fold"/>
</dbReference>
<dbReference type="InterPro" id="IPR006196">
    <property type="entry name" value="RNA-binding_domain_S1_IF1"/>
</dbReference>
<dbReference type="InterPro" id="IPR003029">
    <property type="entry name" value="S1_domain"/>
</dbReference>
<dbReference type="InterPro" id="IPR004368">
    <property type="entry name" value="TIF_IF1"/>
</dbReference>
<dbReference type="NCBIfam" id="TIGR00008">
    <property type="entry name" value="infA"/>
    <property type="match status" value="1"/>
</dbReference>
<dbReference type="PANTHER" id="PTHR33370">
    <property type="entry name" value="TRANSLATION INITIATION FACTOR IF-1, CHLOROPLASTIC"/>
    <property type="match status" value="1"/>
</dbReference>
<dbReference type="PANTHER" id="PTHR33370:SF1">
    <property type="entry name" value="TRANSLATION INITIATION FACTOR IF-1, CHLOROPLASTIC"/>
    <property type="match status" value="1"/>
</dbReference>
<dbReference type="Pfam" id="PF01176">
    <property type="entry name" value="eIF-1a"/>
    <property type="match status" value="1"/>
</dbReference>
<dbReference type="SMART" id="SM00316">
    <property type="entry name" value="S1"/>
    <property type="match status" value="1"/>
</dbReference>
<dbReference type="SUPFAM" id="SSF50249">
    <property type="entry name" value="Nucleic acid-binding proteins"/>
    <property type="match status" value="1"/>
</dbReference>
<dbReference type="PROSITE" id="PS50832">
    <property type="entry name" value="S1_IF1_TYPE"/>
    <property type="match status" value="1"/>
</dbReference>
<comment type="function">
    <text evidence="1">One of the essential components for the initiation of protein synthesis. Stabilizes the binding of IF-2 and IF-3 on the 30S subunit to which N-formylmethionyl-tRNA(fMet) subsequently binds. Helps modulate mRNA selection, yielding the 30S pre-initiation complex (PIC). Upon addition of the 50S ribosomal subunit IF-1, IF-2 and IF-3 are released leaving the mature 70S translation initiation complex.</text>
</comment>
<comment type="subunit">
    <text evidence="1">Component of the 30S ribosomal translation pre-initiation complex which assembles on the 30S ribosome in the order IF-2 and IF-3, IF-1 and N-formylmethionyl-tRNA(fMet); mRNA recruitment can occur at any time during PIC assembly.</text>
</comment>
<comment type="subcellular location">
    <subcellularLocation>
        <location evidence="1">Cytoplasm</location>
    </subcellularLocation>
</comment>
<comment type="similarity">
    <text evidence="1">Belongs to the IF-1 family.</text>
</comment>
<feature type="chain" id="PRO_0000338897" description="Translation initiation factor IF-1 2">
    <location>
        <begin position="1"/>
        <end position="72"/>
    </location>
</feature>
<feature type="domain" description="S1-like" evidence="1">
    <location>
        <begin position="1"/>
        <end position="72"/>
    </location>
</feature>
<proteinExistence type="inferred from homology"/>
<organism>
    <name type="scientific">Cupriavidus necator (strain ATCC 17699 / DSM 428 / KCTC 22496 / NCIMB 10442 / H16 / Stanier 337)</name>
    <name type="common">Ralstonia eutropha</name>
    <dbReference type="NCBI Taxonomy" id="381666"/>
    <lineage>
        <taxon>Bacteria</taxon>
        <taxon>Pseudomonadati</taxon>
        <taxon>Pseudomonadota</taxon>
        <taxon>Betaproteobacteria</taxon>
        <taxon>Burkholderiales</taxon>
        <taxon>Burkholderiaceae</taxon>
        <taxon>Cupriavidus</taxon>
    </lineage>
</organism>
<name>IF12_CUPNH</name>
<protein>
    <recommendedName>
        <fullName evidence="1">Translation initiation factor IF-1 2</fullName>
    </recommendedName>
</protein>
<evidence type="ECO:0000255" key="1">
    <source>
        <dbReference type="HAMAP-Rule" id="MF_00075"/>
    </source>
</evidence>
<keyword id="KW-0963">Cytoplasm</keyword>
<keyword id="KW-0396">Initiation factor</keyword>
<keyword id="KW-0648">Protein biosynthesis</keyword>
<keyword id="KW-1185">Reference proteome</keyword>
<keyword id="KW-0694">RNA-binding</keyword>
<keyword id="KW-0699">rRNA-binding</keyword>
<sequence length="72" mass="8225">MAKDDVIQMQGEVLENLPNATFRVKLENGHVVLGHISGKMRMNYIRILPGDKVTVELTPYDLSRARIVFRTK</sequence>